<name>DDL_ACIET</name>
<accession>B9MFR0</accession>
<dbReference type="EC" id="6.3.2.4" evidence="2"/>
<dbReference type="EMBL" id="CP001392">
    <property type="protein sequence ID" value="ACM34411.1"/>
    <property type="molecule type" value="Genomic_DNA"/>
</dbReference>
<dbReference type="RefSeq" id="WP_015914261.1">
    <property type="nucleotide sequence ID" value="NC_011992.1"/>
</dbReference>
<dbReference type="SMR" id="B9MFR0"/>
<dbReference type="KEGG" id="dia:Dtpsy_2978"/>
<dbReference type="eggNOG" id="COG1181">
    <property type="taxonomic scope" value="Bacteria"/>
</dbReference>
<dbReference type="HOGENOM" id="CLU_039268_1_2_4"/>
<dbReference type="UniPathway" id="UPA00219"/>
<dbReference type="Proteomes" id="UP000000450">
    <property type="component" value="Chromosome"/>
</dbReference>
<dbReference type="GO" id="GO:0005829">
    <property type="term" value="C:cytosol"/>
    <property type="evidence" value="ECO:0007669"/>
    <property type="project" value="TreeGrafter"/>
</dbReference>
<dbReference type="GO" id="GO:0005524">
    <property type="term" value="F:ATP binding"/>
    <property type="evidence" value="ECO:0007669"/>
    <property type="project" value="UniProtKB-KW"/>
</dbReference>
<dbReference type="GO" id="GO:0008716">
    <property type="term" value="F:D-alanine-D-alanine ligase activity"/>
    <property type="evidence" value="ECO:0007669"/>
    <property type="project" value="UniProtKB-UniRule"/>
</dbReference>
<dbReference type="GO" id="GO:0046872">
    <property type="term" value="F:metal ion binding"/>
    <property type="evidence" value="ECO:0007669"/>
    <property type="project" value="UniProtKB-KW"/>
</dbReference>
<dbReference type="GO" id="GO:0071555">
    <property type="term" value="P:cell wall organization"/>
    <property type="evidence" value="ECO:0007669"/>
    <property type="project" value="UniProtKB-KW"/>
</dbReference>
<dbReference type="GO" id="GO:0009252">
    <property type="term" value="P:peptidoglycan biosynthetic process"/>
    <property type="evidence" value="ECO:0007669"/>
    <property type="project" value="UniProtKB-UniRule"/>
</dbReference>
<dbReference type="GO" id="GO:0008360">
    <property type="term" value="P:regulation of cell shape"/>
    <property type="evidence" value="ECO:0007669"/>
    <property type="project" value="UniProtKB-KW"/>
</dbReference>
<dbReference type="FunFam" id="3.40.50.20:FF:000013">
    <property type="entry name" value="D-alanine--D-alanine ligase"/>
    <property type="match status" value="1"/>
</dbReference>
<dbReference type="Gene3D" id="3.40.50.20">
    <property type="match status" value="1"/>
</dbReference>
<dbReference type="Gene3D" id="3.30.1490.20">
    <property type="entry name" value="ATP-grasp fold, A domain"/>
    <property type="match status" value="1"/>
</dbReference>
<dbReference type="Gene3D" id="3.30.470.20">
    <property type="entry name" value="ATP-grasp fold, B domain"/>
    <property type="match status" value="1"/>
</dbReference>
<dbReference type="HAMAP" id="MF_00047">
    <property type="entry name" value="Dala_Dala_lig"/>
    <property type="match status" value="1"/>
</dbReference>
<dbReference type="InterPro" id="IPR011761">
    <property type="entry name" value="ATP-grasp"/>
</dbReference>
<dbReference type="InterPro" id="IPR013815">
    <property type="entry name" value="ATP_grasp_subdomain_1"/>
</dbReference>
<dbReference type="InterPro" id="IPR000291">
    <property type="entry name" value="D-Ala_lig_Van_CS"/>
</dbReference>
<dbReference type="InterPro" id="IPR005905">
    <property type="entry name" value="D_ala_D_ala"/>
</dbReference>
<dbReference type="InterPro" id="IPR011095">
    <property type="entry name" value="Dala_Dala_lig_C"/>
</dbReference>
<dbReference type="InterPro" id="IPR011127">
    <property type="entry name" value="Dala_Dala_lig_N"/>
</dbReference>
<dbReference type="InterPro" id="IPR016185">
    <property type="entry name" value="PreATP-grasp_dom_sf"/>
</dbReference>
<dbReference type="NCBIfam" id="TIGR01205">
    <property type="entry name" value="D_ala_D_alaTIGR"/>
    <property type="match status" value="1"/>
</dbReference>
<dbReference type="NCBIfam" id="NF002378">
    <property type="entry name" value="PRK01372.1"/>
    <property type="match status" value="1"/>
</dbReference>
<dbReference type="PANTHER" id="PTHR23132">
    <property type="entry name" value="D-ALANINE--D-ALANINE LIGASE"/>
    <property type="match status" value="1"/>
</dbReference>
<dbReference type="PANTHER" id="PTHR23132:SF23">
    <property type="entry name" value="D-ALANINE--D-ALANINE LIGASE B"/>
    <property type="match status" value="1"/>
</dbReference>
<dbReference type="Pfam" id="PF07478">
    <property type="entry name" value="Dala_Dala_lig_C"/>
    <property type="match status" value="1"/>
</dbReference>
<dbReference type="Pfam" id="PF01820">
    <property type="entry name" value="Dala_Dala_lig_N"/>
    <property type="match status" value="1"/>
</dbReference>
<dbReference type="PIRSF" id="PIRSF039102">
    <property type="entry name" value="Ddl/VanB"/>
    <property type="match status" value="1"/>
</dbReference>
<dbReference type="SUPFAM" id="SSF56059">
    <property type="entry name" value="Glutathione synthetase ATP-binding domain-like"/>
    <property type="match status" value="1"/>
</dbReference>
<dbReference type="SUPFAM" id="SSF52440">
    <property type="entry name" value="PreATP-grasp domain"/>
    <property type="match status" value="1"/>
</dbReference>
<dbReference type="PROSITE" id="PS50975">
    <property type="entry name" value="ATP_GRASP"/>
    <property type="match status" value="1"/>
</dbReference>
<dbReference type="PROSITE" id="PS00843">
    <property type="entry name" value="DALA_DALA_LIGASE_1"/>
    <property type="match status" value="1"/>
</dbReference>
<dbReference type="PROSITE" id="PS00844">
    <property type="entry name" value="DALA_DALA_LIGASE_2"/>
    <property type="match status" value="1"/>
</dbReference>
<protein>
    <recommendedName>
        <fullName evidence="2">D-alanine--D-alanine ligase</fullName>
        <ecNumber evidence="2">6.3.2.4</ecNumber>
    </recommendedName>
    <alternativeName>
        <fullName evidence="2">D-Ala-D-Ala ligase</fullName>
    </alternativeName>
    <alternativeName>
        <fullName evidence="2">D-alanylalanine synthetase</fullName>
    </alternativeName>
</protein>
<evidence type="ECO:0000250" key="1"/>
<evidence type="ECO:0000255" key="2">
    <source>
        <dbReference type="HAMAP-Rule" id="MF_00047"/>
    </source>
</evidence>
<keyword id="KW-0067">ATP-binding</keyword>
<keyword id="KW-0133">Cell shape</keyword>
<keyword id="KW-0961">Cell wall biogenesis/degradation</keyword>
<keyword id="KW-0963">Cytoplasm</keyword>
<keyword id="KW-0436">Ligase</keyword>
<keyword id="KW-0460">Magnesium</keyword>
<keyword id="KW-0464">Manganese</keyword>
<keyword id="KW-0479">Metal-binding</keyword>
<keyword id="KW-0547">Nucleotide-binding</keyword>
<keyword id="KW-0573">Peptidoglycan synthesis</keyword>
<keyword id="KW-1185">Reference proteome</keyword>
<feature type="chain" id="PRO_1000189736" description="D-alanine--D-alanine ligase">
    <location>
        <begin position="1"/>
        <end position="332"/>
    </location>
</feature>
<feature type="domain" description="ATP-grasp" evidence="2">
    <location>
        <begin position="112"/>
        <end position="312"/>
    </location>
</feature>
<feature type="binding site" evidence="2">
    <location>
        <begin position="138"/>
        <end position="193"/>
    </location>
    <ligand>
        <name>ATP</name>
        <dbReference type="ChEBI" id="CHEBI:30616"/>
    </ligand>
</feature>
<feature type="binding site" evidence="2">
    <location>
        <position position="265"/>
    </location>
    <ligand>
        <name>Mg(2+)</name>
        <dbReference type="ChEBI" id="CHEBI:18420"/>
        <label>1</label>
    </ligand>
</feature>
<feature type="binding site" evidence="2">
    <location>
        <position position="279"/>
    </location>
    <ligand>
        <name>Mg(2+)</name>
        <dbReference type="ChEBI" id="CHEBI:18420"/>
        <label>1</label>
    </ligand>
</feature>
<feature type="binding site" evidence="2">
    <location>
        <position position="279"/>
    </location>
    <ligand>
        <name>Mg(2+)</name>
        <dbReference type="ChEBI" id="CHEBI:18420"/>
        <label>2</label>
    </ligand>
</feature>
<feature type="binding site" evidence="2">
    <location>
        <position position="281"/>
    </location>
    <ligand>
        <name>Mg(2+)</name>
        <dbReference type="ChEBI" id="CHEBI:18420"/>
        <label>2</label>
    </ligand>
</feature>
<reference key="1">
    <citation type="submission" date="2009-01" db="EMBL/GenBank/DDBJ databases">
        <title>Complete sequence of Diaphorobacter sp. TPSY.</title>
        <authorList>
            <consortium name="US DOE Joint Genome Institute"/>
            <person name="Lucas S."/>
            <person name="Copeland A."/>
            <person name="Lapidus A."/>
            <person name="Glavina del Rio T."/>
            <person name="Tice H."/>
            <person name="Bruce D."/>
            <person name="Goodwin L."/>
            <person name="Pitluck S."/>
            <person name="Chertkov O."/>
            <person name="Brettin T."/>
            <person name="Detter J.C."/>
            <person name="Han C."/>
            <person name="Larimer F."/>
            <person name="Land M."/>
            <person name="Hauser L."/>
            <person name="Kyrpides N."/>
            <person name="Mikhailova N."/>
            <person name="Coates J.D."/>
        </authorList>
    </citation>
    <scope>NUCLEOTIDE SEQUENCE [LARGE SCALE GENOMIC DNA]</scope>
    <source>
        <strain>TPSY</strain>
    </source>
</reference>
<organism>
    <name type="scientific">Acidovorax ebreus (strain TPSY)</name>
    <name type="common">Diaphorobacter sp. (strain TPSY)</name>
    <dbReference type="NCBI Taxonomy" id="535289"/>
    <lineage>
        <taxon>Bacteria</taxon>
        <taxon>Pseudomonadati</taxon>
        <taxon>Pseudomonadota</taxon>
        <taxon>Betaproteobacteria</taxon>
        <taxon>Burkholderiales</taxon>
        <taxon>Comamonadaceae</taxon>
        <taxon>Diaphorobacter</taxon>
    </lineage>
</organism>
<gene>
    <name evidence="2" type="primary">ddl</name>
    <name type="ordered locus">Dtpsy_2978</name>
</gene>
<proteinExistence type="inferred from homology"/>
<sequence length="332" mass="35590">MSQNDPKIDVKALGKVAVLMGGTSAEREVSLMSGGGVLQALRSRGVDAHAFDPAHSDLSELKAHGYSRCFIALHGRHGEDGTVQGALELLGIPYTGPGVMASSIAMDKIMTKRIWRADGLPTPDWRLVSSSAETAQAFQELGAPMIVKPSREGSTIGLTKVTSLGQCEQAYRLAAQHDPEVLCEQFIDGDETTCPILGQGAEARALPVIRIEAPQGNYDYQNKYFTDVTQYHCPSGLPEAEEREIQRIVVQAYRTLGCRGWARADIMIRASDRKPFLLEINTSPGMTGHSLVPMSANASGISYPDLCLRILASASLDALQGRAGAAGGREPV</sequence>
<comment type="function">
    <text evidence="2">Cell wall formation.</text>
</comment>
<comment type="catalytic activity">
    <reaction evidence="2">
        <text>2 D-alanine + ATP = D-alanyl-D-alanine + ADP + phosphate + H(+)</text>
        <dbReference type="Rhea" id="RHEA:11224"/>
        <dbReference type="ChEBI" id="CHEBI:15378"/>
        <dbReference type="ChEBI" id="CHEBI:30616"/>
        <dbReference type="ChEBI" id="CHEBI:43474"/>
        <dbReference type="ChEBI" id="CHEBI:57416"/>
        <dbReference type="ChEBI" id="CHEBI:57822"/>
        <dbReference type="ChEBI" id="CHEBI:456216"/>
        <dbReference type="EC" id="6.3.2.4"/>
    </reaction>
</comment>
<comment type="cofactor">
    <cofactor evidence="1">
        <name>Mg(2+)</name>
        <dbReference type="ChEBI" id="CHEBI:18420"/>
    </cofactor>
    <cofactor evidence="1">
        <name>Mn(2+)</name>
        <dbReference type="ChEBI" id="CHEBI:29035"/>
    </cofactor>
    <text evidence="1">Binds 2 magnesium or manganese ions per subunit.</text>
</comment>
<comment type="pathway">
    <text evidence="2">Cell wall biogenesis; peptidoglycan biosynthesis.</text>
</comment>
<comment type="subcellular location">
    <subcellularLocation>
        <location evidence="2">Cytoplasm</location>
    </subcellularLocation>
</comment>
<comment type="similarity">
    <text evidence="2">Belongs to the D-alanine--D-alanine ligase family.</text>
</comment>